<accession>A0A410N6V5</accession>
<gene>
    <name evidence="3" type="ORF">HFTV1-gp30</name>
</gene>
<proteinExistence type="evidence at protein level"/>
<reference key="1">
    <citation type="journal article" date="2019" name="Environ. Microbiol.">
        <title>Novel haloarchaeal viruses from Lake Retba infecting Haloferax and Halorubrum species.</title>
        <authorList>
            <person name="Mizuno C.M."/>
            <person name="Prajapati B."/>
            <person name="Lucas-Staat S."/>
            <person name="Sime-Ngando T."/>
            <person name="Forterre P."/>
            <person name="Bamford D.H."/>
            <person name="Prangishvili D."/>
            <person name="Krupovic M."/>
            <person name="Oksanen H.M."/>
        </authorList>
    </citation>
    <scope>NUCLEOTIDE SEQUENCE [LARGE SCALE GENOMIC DNA]</scope>
</reference>
<reference key="2">
    <citation type="submission" date="2023-10" db="UniProtKB">
        <authorList>
            <person name="Isupov M."/>
        </authorList>
    </citation>
    <scope>SEQUENCE REVISION</scope>
</reference>
<comment type="sequence caution" evidence="2">
    <conflict type="erroneous initiation">
        <sequence resource="EMBL-CDS" id="QAS68863"/>
    </conflict>
    <text>Truncated N-terminus.</text>
</comment>
<dbReference type="EMBL" id="MG550112">
    <property type="protein sequence ID" value="QAS68863.1"/>
    <property type="status" value="ALT_INIT"/>
    <property type="molecule type" value="Genomic_DNA"/>
</dbReference>
<dbReference type="PDB" id="8QPG">
    <property type="method" value="EM"/>
    <property type="resolution" value="2.36 A"/>
    <property type="chains" value="TD/TE/TF/TG/TH/TI=1-115"/>
</dbReference>
<dbReference type="PDB" id="8QPQ">
    <property type="method" value="EM"/>
    <property type="resolution" value="2.70 A"/>
    <property type="chains" value="TD/TE/TF/TG/TH/TI=1-115"/>
</dbReference>
<dbReference type="PDBsum" id="8QPG"/>
<dbReference type="PDBsum" id="8QPQ"/>
<dbReference type="EMDB" id="EMD-18550"/>
<dbReference type="EMDB" id="EMD-18559"/>
<dbReference type="SMR" id="A0A410N6V5"/>
<dbReference type="Proteomes" id="UP000289930">
    <property type="component" value="Genome"/>
</dbReference>
<feature type="chain" id="PRO_0000459578" description="Gp30">
    <location>
        <begin position="1"/>
        <end position="115"/>
    </location>
</feature>
<sequence>MTDTIVNVQGSFFSASASGVADTESLLIDPQDAKFGAIEIHNIAHGGSVDVELLTSSDDTELVEDAAVTLDSFTGEGISQGNQIEASDNTNTYIRITNTSGGAIDIIATGREVSQ</sequence>
<organism>
    <name type="scientific">Haloferax tailed virus 1</name>
    <name type="common">HFTV1</name>
    <dbReference type="NCBI Taxonomy" id="2507575"/>
    <lineage>
        <taxon>Viruses</taxon>
        <taxon>Duplodnaviria</taxon>
        <taxon>Heunggongvirae</taxon>
        <taxon>Uroviricota</taxon>
        <taxon>Caudoviricetes</taxon>
        <taxon>Kirjokansivirales</taxon>
        <taxon>Haloferuviridae</taxon>
        <taxon>Retbasiphovirus</taxon>
        <taxon>Retbasiphovirus HFTV1</taxon>
    </lineage>
</organism>
<keyword id="KW-0002">3D-structure</keyword>
<keyword id="KW-1185">Reference proteome</keyword>
<protein>
    <recommendedName>
        <fullName>Gp30</fullName>
    </recommendedName>
    <alternativeName>
        <fullName evidence="1">Gene product 30</fullName>
    </alternativeName>
</protein>
<evidence type="ECO:0000305" key="1"/>
<evidence type="ECO:0000305" key="2">
    <source ref="2"/>
</evidence>
<evidence type="ECO:0000312" key="3">
    <source>
        <dbReference type="EMBL" id="QAS68863.1"/>
    </source>
</evidence>
<name>GP30_HFTV1</name>